<feature type="chain" id="PRO_0000148198" description="Phosphoribosylformylglycinamidine cyclo-ligase">
    <location>
        <begin position="1"/>
        <end position="345"/>
    </location>
</feature>
<gene>
    <name evidence="1" type="primary">purM</name>
    <name type="ordered locus">BL1122</name>
</gene>
<reference key="1">
    <citation type="journal article" date="2002" name="Proc. Natl. Acad. Sci. U.S.A.">
        <title>The genome sequence of Bifidobacterium longum reflects its adaptation to the human gastrointestinal tract.</title>
        <authorList>
            <person name="Schell M.A."/>
            <person name="Karmirantzou M."/>
            <person name="Snel B."/>
            <person name="Vilanova D."/>
            <person name="Berger B."/>
            <person name="Pessi G."/>
            <person name="Zwahlen M.-C."/>
            <person name="Desiere F."/>
            <person name="Bork P."/>
            <person name="Delley M."/>
            <person name="Pridmore R.D."/>
            <person name="Arigoni F."/>
        </authorList>
    </citation>
    <scope>NUCLEOTIDE SEQUENCE [LARGE SCALE GENOMIC DNA]</scope>
    <source>
        <strain>NCC 2705</strain>
    </source>
</reference>
<proteinExistence type="inferred from homology"/>
<dbReference type="EC" id="6.3.3.1" evidence="1"/>
<dbReference type="EMBL" id="AE014295">
    <property type="protein sequence ID" value="AAN24929.1"/>
    <property type="molecule type" value="Genomic_DNA"/>
</dbReference>
<dbReference type="RefSeq" id="NP_696293.1">
    <property type="nucleotide sequence ID" value="NC_004307.2"/>
</dbReference>
<dbReference type="RefSeq" id="WP_010081095.1">
    <property type="nucleotide sequence ID" value="NC_004307.2"/>
</dbReference>
<dbReference type="SMR" id="Q8G595"/>
<dbReference type="STRING" id="206672.BL1122"/>
<dbReference type="EnsemblBacteria" id="AAN24929">
    <property type="protein sequence ID" value="AAN24929"/>
    <property type="gene ID" value="BL1122"/>
</dbReference>
<dbReference type="GeneID" id="69577729"/>
<dbReference type="KEGG" id="blo:BL1122"/>
<dbReference type="PATRIC" id="fig|206672.9.peg.832"/>
<dbReference type="HOGENOM" id="CLU_047116_0_0_11"/>
<dbReference type="OrthoDB" id="9777881at2"/>
<dbReference type="PhylomeDB" id="Q8G595"/>
<dbReference type="UniPathway" id="UPA00074">
    <property type="reaction ID" value="UER00129"/>
</dbReference>
<dbReference type="Proteomes" id="UP000000439">
    <property type="component" value="Chromosome"/>
</dbReference>
<dbReference type="GO" id="GO:0005829">
    <property type="term" value="C:cytosol"/>
    <property type="evidence" value="ECO:0007669"/>
    <property type="project" value="TreeGrafter"/>
</dbReference>
<dbReference type="GO" id="GO:0005524">
    <property type="term" value="F:ATP binding"/>
    <property type="evidence" value="ECO:0007669"/>
    <property type="project" value="UniProtKB-KW"/>
</dbReference>
<dbReference type="GO" id="GO:0004637">
    <property type="term" value="F:phosphoribosylamine-glycine ligase activity"/>
    <property type="evidence" value="ECO:0007669"/>
    <property type="project" value="TreeGrafter"/>
</dbReference>
<dbReference type="GO" id="GO:0004641">
    <property type="term" value="F:phosphoribosylformylglycinamidine cyclo-ligase activity"/>
    <property type="evidence" value="ECO:0007669"/>
    <property type="project" value="UniProtKB-UniRule"/>
</dbReference>
<dbReference type="GO" id="GO:0006189">
    <property type="term" value="P:'de novo' IMP biosynthetic process"/>
    <property type="evidence" value="ECO:0007669"/>
    <property type="project" value="UniProtKB-UniRule"/>
</dbReference>
<dbReference type="GO" id="GO:0046084">
    <property type="term" value="P:adenine biosynthetic process"/>
    <property type="evidence" value="ECO:0007669"/>
    <property type="project" value="TreeGrafter"/>
</dbReference>
<dbReference type="CDD" id="cd02196">
    <property type="entry name" value="PurM"/>
    <property type="match status" value="1"/>
</dbReference>
<dbReference type="FunFam" id="3.30.1330.10:FF:000001">
    <property type="entry name" value="Phosphoribosylformylglycinamidine cyclo-ligase"/>
    <property type="match status" value="1"/>
</dbReference>
<dbReference type="FunFam" id="3.90.650.10:FF:000001">
    <property type="entry name" value="Phosphoribosylformylglycinamidine cyclo-ligase"/>
    <property type="match status" value="1"/>
</dbReference>
<dbReference type="Gene3D" id="3.90.650.10">
    <property type="entry name" value="PurM-like C-terminal domain"/>
    <property type="match status" value="1"/>
</dbReference>
<dbReference type="Gene3D" id="3.30.1330.10">
    <property type="entry name" value="PurM-like, N-terminal domain"/>
    <property type="match status" value="1"/>
</dbReference>
<dbReference type="HAMAP" id="MF_00741">
    <property type="entry name" value="AIRS"/>
    <property type="match status" value="1"/>
</dbReference>
<dbReference type="InterPro" id="IPR010918">
    <property type="entry name" value="PurM-like_C_dom"/>
</dbReference>
<dbReference type="InterPro" id="IPR036676">
    <property type="entry name" value="PurM-like_C_sf"/>
</dbReference>
<dbReference type="InterPro" id="IPR016188">
    <property type="entry name" value="PurM-like_N"/>
</dbReference>
<dbReference type="InterPro" id="IPR036921">
    <property type="entry name" value="PurM-like_N_sf"/>
</dbReference>
<dbReference type="InterPro" id="IPR004733">
    <property type="entry name" value="PurM_cligase"/>
</dbReference>
<dbReference type="NCBIfam" id="TIGR00878">
    <property type="entry name" value="purM"/>
    <property type="match status" value="1"/>
</dbReference>
<dbReference type="PANTHER" id="PTHR10520:SF12">
    <property type="entry name" value="TRIFUNCTIONAL PURINE BIOSYNTHETIC PROTEIN ADENOSINE-3"/>
    <property type="match status" value="1"/>
</dbReference>
<dbReference type="PANTHER" id="PTHR10520">
    <property type="entry name" value="TRIFUNCTIONAL PURINE BIOSYNTHETIC PROTEIN ADENOSINE-3-RELATED"/>
    <property type="match status" value="1"/>
</dbReference>
<dbReference type="Pfam" id="PF00586">
    <property type="entry name" value="AIRS"/>
    <property type="match status" value="1"/>
</dbReference>
<dbReference type="Pfam" id="PF02769">
    <property type="entry name" value="AIRS_C"/>
    <property type="match status" value="1"/>
</dbReference>
<dbReference type="SUPFAM" id="SSF56042">
    <property type="entry name" value="PurM C-terminal domain-like"/>
    <property type="match status" value="1"/>
</dbReference>
<dbReference type="SUPFAM" id="SSF55326">
    <property type="entry name" value="PurM N-terminal domain-like"/>
    <property type="match status" value="1"/>
</dbReference>
<keyword id="KW-0067">ATP-binding</keyword>
<keyword id="KW-0963">Cytoplasm</keyword>
<keyword id="KW-0436">Ligase</keyword>
<keyword id="KW-0547">Nucleotide-binding</keyword>
<keyword id="KW-0658">Purine biosynthesis</keyword>
<keyword id="KW-1185">Reference proteome</keyword>
<name>PUR5_BIFLO</name>
<protein>
    <recommendedName>
        <fullName evidence="1">Phosphoribosylformylglycinamidine cyclo-ligase</fullName>
        <ecNumber evidence="1">6.3.3.1</ecNumber>
    </recommendedName>
    <alternativeName>
        <fullName evidence="1">AIR synthase</fullName>
    </alternativeName>
    <alternativeName>
        <fullName evidence="1">AIRS</fullName>
    </alternativeName>
    <alternativeName>
        <fullName evidence="1">Phosphoribosyl-aminoimidazole synthetase</fullName>
    </alternativeName>
</protein>
<sequence length="345" mass="36002">MPKAYENAGVSVEAGYEVVKRIKSHVARTNRPGVVGGIGGFGGLFDLASLGYKEPVLISGTDGVGTKLMVAKLANKHDTIGIDCVAMCVNDIAAQGAEPLFFLDYIACGKNDPALLEQVVAGVADGCVQAGSALVGGETAEMPGMYDEDEYDLAGFSVGVAEKSAIVDGSTIAEGDVLIGLPSTGVHSNGFSLVRKALFEQAGYTVDTELDELGGEKLGDVLLTPTKIYVKALSPLFKAGVVKGVAHITGGGFIENIPRMIPDGLAAEIELGTWPVLPIFDVLEKAGNIDHKEMYNIFNMGIGMVLAIDPARKDEALKLLADNNEPAYVLGSITADTTGTQIVLK</sequence>
<accession>Q8G595</accession>
<evidence type="ECO:0000255" key="1">
    <source>
        <dbReference type="HAMAP-Rule" id="MF_00741"/>
    </source>
</evidence>
<organism>
    <name type="scientific">Bifidobacterium longum (strain NCC 2705)</name>
    <dbReference type="NCBI Taxonomy" id="206672"/>
    <lineage>
        <taxon>Bacteria</taxon>
        <taxon>Bacillati</taxon>
        <taxon>Actinomycetota</taxon>
        <taxon>Actinomycetes</taxon>
        <taxon>Bifidobacteriales</taxon>
        <taxon>Bifidobacteriaceae</taxon>
        <taxon>Bifidobacterium</taxon>
    </lineage>
</organism>
<comment type="catalytic activity">
    <reaction evidence="1">
        <text>2-formamido-N(1)-(5-O-phospho-beta-D-ribosyl)acetamidine + ATP = 5-amino-1-(5-phospho-beta-D-ribosyl)imidazole + ADP + phosphate + H(+)</text>
        <dbReference type="Rhea" id="RHEA:23032"/>
        <dbReference type="ChEBI" id="CHEBI:15378"/>
        <dbReference type="ChEBI" id="CHEBI:30616"/>
        <dbReference type="ChEBI" id="CHEBI:43474"/>
        <dbReference type="ChEBI" id="CHEBI:137981"/>
        <dbReference type="ChEBI" id="CHEBI:147287"/>
        <dbReference type="ChEBI" id="CHEBI:456216"/>
        <dbReference type="EC" id="6.3.3.1"/>
    </reaction>
</comment>
<comment type="pathway">
    <text evidence="1">Purine metabolism; IMP biosynthesis via de novo pathway; 5-amino-1-(5-phospho-D-ribosyl)imidazole from N(2)-formyl-N(1)-(5-phospho-D-ribosyl)glycinamide: step 2/2.</text>
</comment>
<comment type="subcellular location">
    <subcellularLocation>
        <location evidence="1">Cytoplasm</location>
    </subcellularLocation>
</comment>
<comment type="similarity">
    <text evidence="1">Belongs to the AIR synthase family.</text>
</comment>